<protein>
    <recommendedName>
        <fullName evidence="1">tRNA modification GTPase MnmE</fullName>
        <ecNumber evidence="1">3.6.-.-</ecNumber>
    </recommendedName>
</protein>
<sequence>MEFDTIAAISTALGEGAIAIVRVSGDDAVEKVNRIFKGKDLTEVPSHTIHYGHIVDLDTNQVIEEVMVSIMRAPRTFTRENIVEINCHGGLVSVNKVLQLILAQGVRLAEPGEFTKRAFLNGRIDLSQAEAVMDLIRAKTDRAMNVAINQMEGRLSKLIGRLRQDILETLAHVEVNIDYPEYDDVEEMTHNILIEKATHVRAEIAKILETSKQGKILREGIATAIIGRPNVGKSSLLNSLVQEKKAIVTDIAGTTRDVIEEYVNVRGVPLKLIDTAGIRETEDVVERIGVERSKEMMSQADLVLVVVNYSETLTNEDEELFRAVQGKDFIVIVNKTDLPQAIDMERVIELAAGNRVITTSLIEEQGIDELEKAIADLFFEGTIDSADVTYVSNARHIGLLTQAGKTIGDAIEAIENGVPIDMVQIDLTRTWEILGEITGDTVHESLIDQLFSQFCLGK</sequence>
<name>MNME_BACHK</name>
<reference key="1">
    <citation type="journal article" date="2006" name="J. Bacteriol.">
        <title>Pathogenomic sequence analysis of Bacillus cereus and Bacillus thuringiensis isolates closely related to Bacillus anthracis.</title>
        <authorList>
            <person name="Han C.S."/>
            <person name="Xie G."/>
            <person name="Challacombe J.F."/>
            <person name="Altherr M.R."/>
            <person name="Bhotika S.S."/>
            <person name="Bruce D."/>
            <person name="Campbell C.S."/>
            <person name="Campbell M.L."/>
            <person name="Chen J."/>
            <person name="Chertkov O."/>
            <person name="Cleland C."/>
            <person name="Dimitrijevic M."/>
            <person name="Doggett N.A."/>
            <person name="Fawcett J.J."/>
            <person name="Glavina T."/>
            <person name="Goodwin L.A."/>
            <person name="Hill K.K."/>
            <person name="Hitchcock P."/>
            <person name="Jackson P.J."/>
            <person name="Keim P."/>
            <person name="Kewalramani A.R."/>
            <person name="Longmire J."/>
            <person name="Lucas S."/>
            <person name="Malfatti S."/>
            <person name="McMurry K."/>
            <person name="Meincke L.J."/>
            <person name="Misra M."/>
            <person name="Moseman B.L."/>
            <person name="Mundt M."/>
            <person name="Munk A.C."/>
            <person name="Okinaka R.T."/>
            <person name="Parson-Quintana B."/>
            <person name="Reilly L.P."/>
            <person name="Richardson P."/>
            <person name="Robinson D.L."/>
            <person name="Rubin E."/>
            <person name="Saunders E."/>
            <person name="Tapia R."/>
            <person name="Tesmer J.G."/>
            <person name="Thayer N."/>
            <person name="Thompson L.S."/>
            <person name="Tice H."/>
            <person name="Ticknor L.O."/>
            <person name="Wills P.L."/>
            <person name="Brettin T.S."/>
            <person name="Gilna P."/>
        </authorList>
    </citation>
    <scope>NUCLEOTIDE SEQUENCE [LARGE SCALE GENOMIC DNA]</scope>
    <source>
        <strain>97-27</strain>
    </source>
</reference>
<organism>
    <name type="scientific">Bacillus thuringiensis subsp. konkukian (strain 97-27)</name>
    <dbReference type="NCBI Taxonomy" id="281309"/>
    <lineage>
        <taxon>Bacteria</taxon>
        <taxon>Bacillati</taxon>
        <taxon>Bacillota</taxon>
        <taxon>Bacilli</taxon>
        <taxon>Bacillales</taxon>
        <taxon>Bacillaceae</taxon>
        <taxon>Bacillus</taxon>
        <taxon>Bacillus cereus group</taxon>
    </lineage>
</organism>
<evidence type="ECO:0000255" key="1">
    <source>
        <dbReference type="HAMAP-Rule" id="MF_00379"/>
    </source>
</evidence>
<keyword id="KW-0963">Cytoplasm</keyword>
<keyword id="KW-0342">GTP-binding</keyword>
<keyword id="KW-0378">Hydrolase</keyword>
<keyword id="KW-0460">Magnesium</keyword>
<keyword id="KW-0479">Metal-binding</keyword>
<keyword id="KW-0547">Nucleotide-binding</keyword>
<keyword id="KW-0630">Potassium</keyword>
<keyword id="KW-0819">tRNA processing</keyword>
<accession>Q6HAF2</accession>
<proteinExistence type="inferred from homology"/>
<gene>
    <name evidence="1" type="primary">mnmE</name>
    <name evidence="1" type="synonym">trmE</name>
    <name type="ordered locus">BT9727_5165</name>
</gene>
<dbReference type="EC" id="3.6.-.-" evidence="1"/>
<dbReference type="EMBL" id="AE017355">
    <property type="protein sequence ID" value="AAT62677.1"/>
    <property type="molecule type" value="Genomic_DNA"/>
</dbReference>
<dbReference type="RefSeq" id="WP_000393777.1">
    <property type="nucleotide sequence ID" value="NC_005957.1"/>
</dbReference>
<dbReference type="RefSeq" id="YP_039474.1">
    <property type="nucleotide sequence ID" value="NC_005957.1"/>
</dbReference>
<dbReference type="SMR" id="Q6HAF2"/>
<dbReference type="GeneID" id="45025312"/>
<dbReference type="KEGG" id="btk:BT9727_5165"/>
<dbReference type="PATRIC" id="fig|281309.8.peg.5490"/>
<dbReference type="HOGENOM" id="CLU_019624_4_1_9"/>
<dbReference type="Proteomes" id="UP000001301">
    <property type="component" value="Chromosome"/>
</dbReference>
<dbReference type="GO" id="GO:0005829">
    <property type="term" value="C:cytosol"/>
    <property type="evidence" value="ECO:0007669"/>
    <property type="project" value="TreeGrafter"/>
</dbReference>
<dbReference type="GO" id="GO:0005525">
    <property type="term" value="F:GTP binding"/>
    <property type="evidence" value="ECO:0007669"/>
    <property type="project" value="UniProtKB-UniRule"/>
</dbReference>
<dbReference type="GO" id="GO:0003924">
    <property type="term" value="F:GTPase activity"/>
    <property type="evidence" value="ECO:0007669"/>
    <property type="project" value="UniProtKB-UniRule"/>
</dbReference>
<dbReference type="GO" id="GO:0046872">
    <property type="term" value="F:metal ion binding"/>
    <property type="evidence" value="ECO:0007669"/>
    <property type="project" value="UniProtKB-KW"/>
</dbReference>
<dbReference type="GO" id="GO:0030488">
    <property type="term" value="P:tRNA methylation"/>
    <property type="evidence" value="ECO:0007669"/>
    <property type="project" value="TreeGrafter"/>
</dbReference>
<dbReference type="GO" id="GO:0002098">
    <property type="term" value="P:tRNA wobble uridine modification"/>
    <property type="evidence" value="ECO:0007669"/>
    <property type="project" value="TreeGrafter"/>
</dbReference>
<dbReference type="CDD" id="cd04164">
    <property type="entry name" value="trmE"/>
    <property type="match status" value="1"/>
</dbReference>
<dbReference type="CDD" id="cd14858">
    <property type="entry name" value="TrmE_N"/>
    <property type="match status" value="1"/>
</dbReference>
<dbReference type="FunFam" id="3.30.1360.120:FF:000003">
    <property type="entry name" value="tRNA modification GTPase MnmE"/>
    <property type="match status" value="1"/>
</dbReference>
<dbReference type="FunFam" id="3.40.50.300:FF:000494">
    <property type="entry name" value="tRNA modification GTPase MnmE"/>
    <property type="match status" value="1"/>
</dbReference>
<dbReference type="Gene3D" id="3.40.50.300">
    <property type="entry name" value="P-loop containing nucleotide triphosphate hydrolases"/>
    <property type="match status" value="1"/>
</dbReference>
<dbReference type="Gene3D" id="3.30.1360.120">
    <property type="entry name" value="Probable tRNA modification gtpase trme, domain 1"/>
    <property type="match status" value="1"/>
</dbReference>
<dbReference type="Gene3D" id="1.20.120.430">
    <property type="entry name" value="tRNA modification GTPase MnmE domain 2"/>
    <property type="match status" value="1"/>
</dbReference>
<dbReference type="HAMAP" id="MF_00379">
    <property type="entry name" value="GTPase_MnmE"/>
    <property type="match status" value="1"/>
</dbReference>
<dbReference type="InterPro" id="IPR031168">
    <property type="entry name" value="G_TrmE"/>
</dbReference>
<dbReference type="InterPro" id="IPR006073">
    <property type="entry name" value="GTP-bd"/>
</dbReference>
<dbReference type="InterPro" id="IPR018948">
    <property type="entry name" value="GTP-bd_TrmE_N"/>
</dbReference>
<dbReference type="InterPro" id="IPR004520">
    <property type="entry name" value="GTPase_MnmE"/>
</dbReference>
<dbReference type="InterPro" id="IPR027368">
    <property type="entry name" value="MnmE_dom2"/>
</dbReference>
<dbReference type="InterPro" id="IPR025867">
    <property type="entry name" value="MnmE_helical"/>
</dbReference>
<dbReference type="InterPro" id="IPR027417">
    <property type="entry name" value="P-loop_NTPase"/>
</dbReference>
<dbReference type="InterPro" id="IPR005225">
    <property type="entry name" value="Small_GTP-bd"/>
</dbReference>
<dbReference type="InterPro" id="IPR027266">
    <property type="entry name" value="TrmE/GcvT_dom1"/>
</dbReference>
<dbReference type="NCBIfam" id="TIGR00450">
    <property type="entry name" value="mnmE_trmE_thdF"/>
    <property type="match status" value="1"/>
</dbReference>
<dbReference type="NCBIfam" id="NF003661">
    <property type="entry name" value="PRK05291.1-3"/>
    <property type="match status" value="1"/>
</dbReference>
<dbReference type="NCBIfam" id="TIGR00231">
    <property type="entry name" value="small_GTP"/>
    <property type="match status" value="1"/>
</dbReference>
<dbReference type="PANTHER" id="PTHR42714">
    <property type="entry name" value="TRNA MODIFICATION GTPASE GTPBP3"/>
    <property type="match status" value="1"/>
</dbReference>
<dbReference type="PANTHER" id="PTHR42714:SF2">
    <property type="entry name" value="TRNA MODIFICATION GTPASE GTPBP3, MITOCHONDRIAL"/>
    <property type="match status" value="1"/>
</dbReference>
<dbReference type="Pfam" id="PF01926">
    <property type="entry name" value="MMR_HSR1"/>
    <property type="match status" value="1"/>
</dbReference>
<dbReference type="Pfam" id="PF12631">
    <property type="entry name" value="MnmE_helical"/>
    <property type="match status" value="1"/>
</dbReference>
<dbReference type="Pfam" id="PF10396">
    <property type="entry name" value="TrmE_N"/>
    <property type="match status" value="1"/>
</dbReference>
<dbReference type="SUPFAM" id="SSF52540">
    <property type="entry name" value="P-loop containing nucleoside triphosphate hydrolases"/>
    <property type="match status" value="1"/>
</dbReference>
<dbReference type="SUPFAM" id="SSF116878">
    <property type="entry name" value="TrmE connector domain"/>
    <property type="match status" value="1"/>
</dbReference>
<dbReference type="PROSITE" id="PS51709">
    <property type="entry name" value="G_TRME"/>
    <property type="match status" value="1"/>
</dbReference>
<comment type="function">
    <text evidence="1">Exhibits a very high intrinsic GTPase hydrolysis rate. Involved in the addition of a carboxymethylaminomethyl (cmnm) group at the wobble position (U34) of certain tRNAs, forming tRNA-cmnm(5)s(2)U34.</text>
</comment>
<comment type="cofactor">
    <cofactor evidence="1">
        <name>K(+)</name>
        <dbReference type="ChEBI" id="CHEBI:29103"/>
    </cofactor>
    <text evidence="1">Binds 1 potassium ion per subunit.</text>
</comment>
<comment type="subunit">
    <text evidence="1">Homodimer. Heterotetramer of two MnmE and two MnmG subunits.</text>
</comment>
<comment type="subcellular location">
    <subcellularLocation>
        <location evidence="1">Cytoplasm</location>
    </subcellularLocation>
</comment>
<comment type="similarity">
    <text evidence="1">Belongs to the TRAFAC class TrmE-Era-EngA-EngB-Septin-like GTPase superfamily. TrmE GTPase family.</text>
</comment>
<feature type="chain" id="PRO_1000048802" description="tRNA modification GTPase MnmE">
    <location>
        <begin position="1"/>
        <end position="458"/>
    </location>
</feature>
<feature type="domain" description="TrmE-type G">
    <location>
        <begin position="220"/>
        <end position="379"/>
    </location>
</feature>
<feature type="binding site" evidence="1">
    <location>
        <position position="22"/>
    </location>
    <ligand>
        <name>(6S)-5-formyl-5,6,7,8-tetrahydrofolate</name>
        <dbReference type="ChEBI" id="CHEBI:57457"/>
    </ligand>
</feature>
<feature type="binding site" evidence="1">
    <location>
        <position position="84"/>
    </location>
    <ligand>
        <name>(6S)-5-formyl-5,6,7,8-tetrahydrofolate</name>
        <dbReference type="ChEBI" id="CHEBI:57457"/>
    </ligand>
</feature>
<feature type="binding site" evidence="1">
    <location>
        <position position="123"/>
    </location>
    <ligand>
        <name>(6S)-5-formyl-5,6,7,8-tetrahydrofolate</name>
        <dbReference type="ChEBI" id="CHEBI:57457"/>
    </ligand>
</feature>
<feature type="binding site" evidence="1">
    <location>
        <begin position="230"/>
        <end position="235"/>
    </location>
    <ligand>
        <name>GTP</name>
        <dbReference type="ChEBI" id="CHEBI:37565"/>
    </ligand>
</feature>
<feature type="binding site" evidence="1">
    <location>
        <position position="230"/>
    </location>
    <ligand>
        <name>K(+)</name>
        <dbReference type="ChEBI" id="CHEBI:29103"/>
    </ligand>
</feature>
<feature type="binding site" evidence="1">
    <location>
        <position position="234"/>
    </location>
    <ligand>
        <name>Mg(2+)</name>
        <dbReference type="ChEBI" id="CHEBI:18420"/>
    </ligand>
</feature>
<feature type="binding site" evidence="1">
    <location>
        <begin position="249"/>
        <end position="255"/>
    </location>
    <ligand>
        <name>GTP</name>
        <dbReference type="ChEBI" id="CHEBI:37565"/>
    </ligand>
</feature>
<feature type="binding site" evidence="1">
    <location>
        <position position="249"/>
    </location>
    <ligand>
        <name>K(+)</name>
        <dbReference type="ChEBI" id="CHEBI:29103"/>
    </ligand>
</feature>
<feature type="binding site" evidence="1">
    <location>
        <position position="251"/>
    </location>
    <ligand>
        <name>K(+)</name>
        <dbReference type="ChEBI" id="CHEBI:29103"/>
    </ligand>
</feature>
<feature type="binding site" evidence="1">
    <location>
        <position position="254"/>
    </location>
    <ligand>
        <name>K(+)</name>
        <dbReference type="ChEBI" id="CHEBI:29103"/>
    </ligand>
</feature>
<feature type="binding site" evidence="1">
    <location>
        <position position="255"/>
    </location>
    <ligand>
        <name>Mg(2+)</name>
        <dbReference type="ChEBI" id="CHEBI:18420"/>
    </ligand>
</feature>
<feature type="binding site" evidence="1">
    <location>
        <begin position="274"/>
        <end position="277"/>
    </location>
    <ligand>
        <name>GTP</name>
        <dbReference type="ChEBI" id="CHEBI:37565"/>
    </ligand>
</feature>
<feature type="binding site" evidence="1">
    <location>
        <position position="458"/>
    </location>
    <ligand>
        <name>(6S)-5-formyl-5,6,7,8-tetrahydrofolate</name>
        <dbReference type="ChEBI" id="CHEBI:57457"/>
    </ligand>
</feature>